<dbReference type="EC" id="4.1.1.23" evidence="1"/>
<dbReference type="EMBL" id="CP000479">
    <property type="protein sequence ID" value="ABK68289.1"/>
    <property type="molecule type" value="Genomic_DNA"/>
</dbReference>
<dbReference type="RefSeq" id="WP_011725440.1">
    <property type="nucleotide sequence ID" value="NC_008595.1"/>
</dbReference>
<dbReference type="SMR" id="A0QI32"/>
<dbReference type="GeneID" id="75270785"/>
<dbReference type="KEGG" id="mav:MAV_3388"/>
<dbReference type="HOGENOM" id="CLU_060704_0_0_11"/>
<dbReference type="UniPathway" id="UPA00070">
    <property type="reaction ID" value="UER00120"/>
</dbReference>
<dbReference type="Proteomes" id="UP000001574">
    <property type="component" value="Chromosome"/>
</dbReference>
<dbReference type="GO" id="GO:0004590">
    <property type="term" value="F:orotidine-5'-phosphate decarboxylase activity"/>
    <property type="evidence" value="ECO:0007669"/>
    <property type="project" value="UniProtKB-UniRule"/>
</dbReference>
<dbReference type="GO" id="GO:0006207">
    <property type="term" value="P:'de novo' pyrimidine nucleobase biosynthetic process"/>
    <property type="evidence" value="ECO:0007669"/>
    <property type="project" value="InterPro"/>
</dbReference>
<dbReference type="GO" id="GO:0044205">
    <property type="term" value="P:'de novo' UMP biosynthetic process"/>
    <property type="evidence" value="ECO:0007669"/>
    <property type="project" value="UniProtKB-UniRule"/>
</dbReference>
<dbReference type="CDD" id="cd04725">
    <property type="entry name" value="OMP_decarboxylase_like"/>
    <property type="match status" value="1"/>
</dbReference>
<dbReference type="Gene3D" id="3.20.20.70">
    <property type="entry name" value="Aldolase class I"/>
    <property type="match status" value="1"/>
</dbReference>
<dbReference type="HAMAP" id="MF_01215">
    <property type="entry name" value="OMPdecase_type2"/>
    <property type="match status" value="1"/>
</dbReference>
<dbReference type="InterPro" id="IPR013785">
    <property type="entry name" value="Aldolase_TIM"/>
</dbReference>
<dbReference type="InterPro" id="IPR018089">
    <property type="entry name" value="OMPdecase_AS"/>
</dbReference>
<dbReference type="InterPro" id="IPR011995">
    <property type="entry name" value="OMPdecase_type-2"/>
</dbReference>
<dbReference type="InterPro" id="IPR001754">
    <property type="entry name" value="OMPdeCOase_dom"/>
</dbReference>
<dbReference type="InterPro" id="IPR011060">
    <property type="entry name" value="RibuloseP-bd_barrel"/>
</dbReference>
<dbReference type="NCBIfam" id="TIGR02127">
    <property type="entry name" value="pyrF_sub2"/>
    <property type="match status" value="1"/>
</dbReference>
<dbReference type="PANTHER" id="PTHR43375">
    <property type="entry name" value="OROTIDINE 5'-PHOSPHATE DECARBOXYLASE"/>
    <property type="match status" value="1"/>
</dbReference>
<dbReference type="PANTHER" id="PTHR43375:SF1">
    <property type="entry name" value="OROTIDINE 5'-PHOSPHATE DECARBOXYLASE"/>
    <property type="match status" value="1"/>
</dbReference>
<dbReference type="Pfam" id="PF00215">
    <property type="entry name" value="OMPdecase"/>
    <property type="match status" value="1"/>
</dbReference>
<dbReference type="SMART" id="SM00934">
    <property type="entry name" value="OMPdecase"/>
    <property type="match status" value="1"/>
</dbReference>
<dbReference type="SUPFAM" id="SSF51366">
    <property type="entry name" value="Ribulose-phoshate binding barrel"/>
    <property type="match status" value="1"/>
</dbReference>
<dbReference type="PROSITE" id="PS00156">
    <property type="entry name" value="OMPDECASE"/>
    <property type="match status" value="1"/>
</dbReference>
<evidence type="ECO:0000255" key="1">
    <source>
        <dbReference type="HAMAP-Rule" id="MF_01215"/>
    </source>
</evidence>
<keyword id="KW-0210">Decarboxylase</keyword>
<keyword id="KW-0456">Lyase</keyword>
<keyword id="KW-0665">Pyrimidine biosynthesis</keyword>
<protein>
    <recommendedName>
        <fullName evidence="1">Orotidine 5'-phosphate decarboxylase</fullName>
        <ecNumber evidence="1">4.1.1.23</ecNumber>
    </recommendedName>
    <alternativeName>
        <fullName evidence="1">OMP decarboxylase</fullName>
        <shortName evidence="1">OMPDCase</shortName>
        <shortName evidence="1">OMPdecase</shortName>
    </alternativeName>
</protein>
<comment type="catalytic activity">
    <reaction evidence="1">
        <text>orotidine 5'-phosphate + H(+) = UMP + CO2</text>
        <dbReference type="Rhea" id="RHEA:11596"/>
        <dbReference type="ChEBI" id="CHEBI:15378"/>
        <dbReference type="ChEBI" id="CHEBI:16526"/>
        <dbReference type="ChEBI" id="CHEBI:57538"/>
        <dbReference type="ChEBI" id="CHEBI:57865"/>
        <dbReference type="EC" id="4.1.1.23"/>
    </reaction>
</comment>
<comment type="pathway">
    <text evidence="1">Pyrimidine metabolism; UMP biosynthesis via de novo pathway; UMP from orotate: step 2/2.</text>
</comment>
<comment type="similarity">
    <text evidence="1">Belongs to the OMP decarboxylase family. Type 2 subfamily.</text>
</comment>
<gene>
    <name evidence="1" type="primary">pyrF</name>
    <name type="ordered locus">MAV_3388</name>
</gene>
<accession>A0QI32</accession>
<name>PYRF_MYCA1</name>
<sequence>MTGFGARLAAAKAQRGPLCVGIDPHPELLRAWDLPTTADGLAAFCDICVEAFAGFAVVKPQVAFFEAYGAAGFAVLERTIAALRSAGVLVLADAKRGDIGTTMAAYAAAWAGDSPLAADAVTASPYLGFGSLRPLLEAAAAHDRGVFVLAATSNPEGATVQRAAFDGRTVAQLVVDQAAVVNRSTNPAGPGYVGVVVGATVLQPPDLSALGGPVLVPGLGVQGGRPEALAGLGGAEPGQLLPAVAREVLRAGPDVAELRGAADRMLDAVAYLDV</sequence>
<organism>
    <name type="scientific">Mycobacterium avium (strain 104)</name>
    <dbReference type="NCBI Taxonomy" id="243243"/>
    <lineage>
        <taxon>Bacteria</taxon>
        <taxon>Bacillati</taxon>
        <taxon>Actinomycetota</taxon>
        <taxon>Actinomycetes</taxon>
        <taxon>Mycobacteriales</taxon>
        <taxon>Mycobacteriaceae</taxon>
        <taxon>Mycobacterium</taxon>
        <taxon>Mycobacterium avium complex (MAC)</taxon>
    </lineage>
</organism>
<feature type="chain" id="PRO_1000066476" description="Orotidine 5'-phosphate decarboxylase">
    <location>
        <begin position="1"/>
        <end position="274"/>
    </location>
</feature>
<feature type="active site" description="Proton donor" evidence="1">
    <location>
        <position position="95"/>
    </location>
</feature>
<proteinExistence type="inferred from homology"/>
<reference key="1">
    <citation type="submission" date="2006-10" db="EMBL/GenBank/DDBJ databases">
        <authorList>
            <person name="Fleischmann R.D."/>
            <person name="Dodson R.J."/>
            <person name="Haft D.H."/>
            <person name="Merkel J.S."/>
            <person name="Nelson W.C."/>
            <person name="Fraser C.M."/>
        </authorList>
    </citation>
    <scope>NUCLEOTIDE SEQUENCE [LARGE SCALE GENOMIC DNA]</scope>
    <source>
        <strain>104</strain>
    </source>
</reference>